<name>SYR_CHLPB</name>
<reference key="1">
    <citation type="submission" date="2008-06" db="EMBL/GenBank/DDBJ databases">
        <title>Complete sequence of Chlorobium phaeobacteroides BS1.</title>
        <authorList>
            <consortium name="US DOE Joint Genome Institute"/>
            <person name="Lucas S."/>
            <person name="Copeland A."/>
            <person name="Lapidus A."/>
            <person name="Glavina del Rio T."/>
            <person name="Dalin E."/>
            <person name="Tice H."/>
            <person name="Bruce D."/>
            <person name="Goodwin L."/>
            <person name="Pitluck S."/>
            <person name="Schmutz J."/>
            <person name="Larimer F."/>
            <person name="Land M."/>
            <person name="Hauser L."/>
            <person name="Kyrpides N."/>
            <person name="Ovchinnikova G."/>
            <person name="Li T."/>
            <person name="Liu Z."/>
            <person name="Zhao F."/>
            <person name="Overmann J."/>
            <person name="Bryant D.A."/>
            <person name="Richardson P."/>
        </authorList>
    </citation>
    <scope>NUCLEOTIDE SEQUENCE [LARGE SCALE GENOMIC DNA]</scope>
    <source>
        <strain>BS1</strain>
    </source>
</reference>
<evidence type="ECO:0000255" key="1">
    <source>
        <dbReference type="HAMAP-Rule" id="MF_00123"/>
    </source>
</evidence>
<sequence length="553" mass="62250">MREYLTEHIKQALHKASIPASRAIKIEKPSDSRFGDFSTNIALVLAGECGMNPRQLAQKITENLSFSETTVSKTEIAGPGFINFYLEPAFIMKQVEQIITSSDRFGRGAAGEGKNAIVEYVSANPTGPLTIGRGRGGVLGDCIANILEAHGYTVTREYYFNDAGRQMSILSESVRLRYIELCGIAVEFPETHYQGDYIREIAAAILEKHGEKLVESDSTELFKQTAETHIFTHIKNTLHRLDITHDSYFNEHRLYQEDESGISPNQQVIDALRQKGFIDHYDGATWFMTTRLGQEKDKVLVKSSGEPSYRLPDIAYHVTKFERGFDEIVNIFGADHIDEYPDVIEALKILGYDTDRIRVAINQFVTTTVNGETVKMSTRKGNADLLDDLIDDVGADATRLFFIMRSKDSHLNFDIDLAKKQSKDNPVFYLQYAHARICSLLRIAENEAGFSLEEGSADAHLMGKLTSAHEIQLGFTLLDYPDVIQTCARILEPQKMVEYLHSVAELYHRFYQECPILKADPDIRSARLILSLATRQVLRNGFRILGISAPKSM</sequence>
<dbReference type="EC" id="6.1.1.19" evidence="1"/>
<dbReference type="EMBL" id="CP001101">
    <property type="protein sequence ID" value="ACE05381.1"/>
    <property type="molecule type" value="Genomic_DNA"/>
</dbReference>
<dbReference type="SMR" id="B3EQ83"/>
<dbReference type="STRING" id="331678.Cphamn1_2487"/>
<dbReference type="KEGG" id="cpb:Cphamn1_2487"/>
<dbReference type="eggNOG" id="COG0018">
    <property type="taxonomic scope" value="Bacteria"/>
</dbReference>
<dbReference type="HOGENOM" id="CLU_006406_0_1_10"/>
<dbReference type="OrthoDB" id="9805987at2"/>
<dbReference type="GO" id="GO:0005737">
    <property type="term" value="C:cytoplasm"/>
    <property type="evidence" value="ECO:0007669"/>
    <property type="project" value="UniProtKB-SubCell"/>
</dbReference>
<dbReference type="GO" id="GO:0004814">
    <property type="term" value="F:arginine-tRNA ligase activity"/>
    <property type="evidence" value="ECO:0007669"/>
    <property type="project" value="UniProtKB-UniRule"/>
</dbReference>
<dbReference type="GO" id="GO:0005524">
    <property type="term" value="F:ATP binding"/>
    <property type="evidence" value="ECO:0007669"/>
    <property type="project" value="UniProtKB-UniRule"/>
</dbReference>
<dbReference type="GO" id="GO:0006420">
    <property type="term" value="P:arginyl-tRNA aminoacylation"/>
    <property type="evidence" value="ECO:0007669"/>
    <property type="project" value="UniProtKB-UniRule"/>
</dbReference>
<dbReference type="CDD" id="cd00671">
    <property type="entry name" value="ArgRS_core"/>
    <property type="match status" value="1"/>
</dbReference>
<dbReference type="FunFam" id="1.10.730.10:FF:000008">
    <property type="entry name" value="Arginine--tRNA ligase"/>
    <property type="match status" value="1"/>
</dbReference>
<dbReference type="Gene3D" id="3.30.1360.70">
    <property type="entry name" value="Arginyl tRNA synthetase N-terminal domain"/>
    <property type="match status" value="1"/>
</dbReference>
<dbReference type="Gene3D" id="3.40.50.620">
    <property type="entry name" value="HUPs"/>
    <property type="match status" value="1"/>
</dbReference>
<dbReference type="Gene3D" id="1.10.730.10">
    <property type="entry name" value="Isoleucyl-tRNA Synthetase, Domain 1"/>
    <property type="match status" value="1"/>
</dbReference>
<dbReference type="HAMAP" id="MF_00123">
    <property type="entry name" value="Arg_tRNA_synth"/>
    <property type="match status" value="1"/>
</dbReference>
<dbReference type="InterPro" id="IPR001278">
    <property type="entry name" value="Arg-tRNA-ligase"/>
</dbReference>
<dbReference type="InterPro" id="IPR005148">
    <property type="entry name" value="Arg-tRNA-synth_N"/>
</dbReference>
<dbReference type="InterPro" id="IPR036695">
    <property type="entry name" value="Arg-tRNA-synth_N_sf"/>
</dbReference>
<dbReference type="InterPro" id="IPR035684">
    <property type="entry name" value="ArgRS_core"/>
</dbReference>
<dbReference type="InterPro" id="IPR008909">
    <property type="entry name" value="DALR_anticod-bd"/>
</dbReference>
<dbReference type="InterPro" id="IPR014729">
    <property type="entry name" value="Rossmann-like_a/b/a_fold"/>
</dbReference>
<dbReference type="InterPro" id="IPR009080">
    <property type="entry name" value="tRNAsynth_Ia_anticodon-bd"/>
</dbReference>
<dbReference type="NCBIfam" id="TIGR00456">
    <property type="entry name" value="argS"/>
    <property type="match status" value="1"/>
</dbReference>
<dbReference type="PANTHER" id="PTHR11956:SF5">
    <property type="entry name" value="ARGININE--TRNA LIGASE, CYTOPLASMIC"/>
    <property type="match status" value="1"/>
</dbReference>
<dbReference type="PANTHER" id="PTHR11956">
    <property type="entry name" value="ARGINYL-TRNA SYNTHETASE"/>
    <property type="match status" value="1"/>
</dbReference>
<dbReference type="Pfam" id="PF03485">
    <property type="entry name" value="Arg_tRNA_synt_N"/>
    <property type="match status" value="1"/>
</dbReference>
<dbReference type="Pfam" id="PF05746">
    <property type="entry name" value="DALR_1"/>
    <property type="match status" value="1"/>
</dbReference>
<dbReference type="Pfam" id="PF00750">
    <property type="entry name" value="tRNA-synt_1d"/>
    <property type="match status" value="1"/>
</dbReference>
<dbReference type="PRINTS" id="PR01038">
    <property type="entry name" value="TRNASYNTHARG"/>
</dbReference>
<dbReference type="SMART" id="SM01016">
    <property type="entry name" value="Arg_tRNA_synt_N"/>
    <property type="match status" value="1"/>
</dbReference>
<dbReference type="SMART" id="SM00836">
    <property type="entry name" value="DALR_1"/>
    <property type="match status" value="1"/>
</dbReference>
<dbReference type="SUPFAM" id="SSF47323">
    <property type="entry name" value="Anticodon-binding domain of a subclass of class I aminoacyl-tRNA synthetases"/>
    <property type="match status" value="1"/>
</dbReference>
<dbReference type="SUPFAM" id="SSF55190">
    <property type="entry name" value="Arginyl-tRNA synthetase (ArgRS), N-terminal 'additional' domain"/>
    <property type="match status" value="1"/>
</dbReference>
<dbReference type="SUPFAM" id="SSF52374">
    <property type="entry name" value="Nucleotidylyl transferase"/>
    <property type="match status" value="1"/>
</dbReference>
<feature type="chain" id="PRO_1000095350" description="Arginine--tRNA ligase">
    <location>
        <begin position="1"/>
        <end position="553"/>
    </location>
</feature>
<feature type="short sequence motif" description="'HIGH' region">
    <location>
        <begin position="123"/>
        <end position="133"/>
    </location>
</feature>
<gene>
    <name evidence="1" type="primary">argS</name>
    <name type="ordered locus">Cphamn1_2487</name>
</gene>
<organism>
    <name type="scientific">Chlorobium phaeobacteroides (strain BS1)</name>
    <dbReference type="NCBI Taxonomy" id="331678"/>
    <lineage>
        <taxon>Bacteria</taxon>
        <taxon>Pseudomonadati</taxon>
        <taxon>Chlorobiota</taxon>
        <taxon>Chlorobiia</taxon>
        <taxon>Chlorobiales</taxon>
        <taxon>Chlorobiaceae</taxon>
        <taxon>Chlorobium/Pelodictyon group</taxon>
        <taxon>Chlorobium</taxon>
    </lineage>
</organism>
<comment type="catalytic activity">
    <reaction evidence="1">
        <text>tRNA(Arg) + L-arginine + ATP = L-arginyl-tRNA(Arg) + AMP + diphosphate</text>
        <dbReference type="Rhea" id="RHEA:20301"/>
        <dbReference type="Rhea" id="RHEA-COMP:9658"/>
        <dbReference type="Rhea" id="RHEA-COMP:9673"/>
        <dbReference type="ChEBI" id="CHEBI:30616"/>
        <dbReference type="ChEBI" id="CHEBI:32682"/>
        <dbReference type="ChEBI" id="CHEBI:33019"/>
        <dbReference type="ChEBI" id="CHEBI:78442"/>
        <dbReference type="ChEBI" id="CHEBI:78513"/>
        <dbReference type="ChEBI" id="CHEBI:456215"/>
        <dbReference type="EC" id="6.1.1.19"/>
    </reaction>
</comment>
<comment type="subunit">
    <text evidence="1">Monomer.</text>
</comment>
<comment type="subcellular location">
    <subcellularLocation>
        <location evidence="1">Cytoplasm</location>
    </subcellularLocation>
</comment>
<comment type="similarity">
    <text evidence="1">Belongs to the class-I aminoacyl-tRNA synthetase family.</text>
</comment>
<proteinExistence type="inferred from homology"/>
<accession>B3EQ83</accession>
<protein>
    <recommendedName>
        <fullName evidence="1">Arginine--tRNA ligase</fullName>
        <ecNumber evidence="1">6.1.1.19</ecNumber>
    </recommendedName>
    <alternativeName>
        <fullName evidence="1">Arginyl-tRNA synthetase</fullName>
        <shortName evidence="1">ArgRS</shortName>
    </alternativeName>
</protein>
<keyword id="KW-0030">Aminoacyl-tRNA synthetase</keyword>
<keyword id="KW-0067">ATP-binding</keyword>
<keyword id="KW-0963">Cytoplasm</keyword>
<keyword id="KW-0436">Ligase</keyword>
<keyword id="KW-0547">Nucleotide-binding</keyword>
<keyword id="KW-0648">Protein biosynthesis</keyword>